<organism>
    <name type="scientific">Homo sapiens</name>
    <name type="common">Human</name>
    <dbReference type="NCBI Taxonomy" id="9606"/>
    <lineage>
        <taxon>Eukaryota</taxon>
        <taxon>Metazoa</taxon>
        <taxon>Chordata</taxon>
        <taxon>Craniata</taxon>
        <taxon>Vertebrata</taxon>
        <taxon>Euteleostomi</taxon>
        <taxon>Mammalia</taxon>
        <taxon>Eutheria</taxon>
        <taxon>Euarchontoglires</taxon>
        <taxon>Primates</taxon>
        <taxon>Haplorrhini</taxon>
        <taxon>Catarrhini</taxon>
        <taxon>Hominidae</taxon>
        <taxon>Homo</taxon>
    </lineage>
</organism>
<keyword id="KW-0002">3D-structure</keyword>
<keyword id="KW-0007">Acetylation</keyword>
<keyword id="KW-0025">Alternative splicing</keyword>
<keyword id="KW-0175">Coiled coil</keyword>
<keyword id="KW-0903">Direct protein sequencing</keyword>
<keyword id="KW-1017">Isopeptide bond</keyword>
<keyword id="KW-0539">Nucleus</keyword>
<keyword id="KW-0597">Phosphoprotein</keyword>
<keyword id="KW-1267">Proteomics identification</keyword>
<keyword id="KW-1185">Reference proteome</keyword>
<keyword id="KW-0832">Ubl conjugation</keyword>
<proteinExistence type="evidence at protein level"/>
<sequence>MEDSASASLSSAAATGTSTSTPAAPTARKQLDKEQVRKAVDALLTHCKSRKNNYGLLLNENESLFLMVVLWKIPSKELRVRLTLPHSIRSDSEDICLFTKDEPNSTPEKTEQFYRKLLNKHGIKTVSQIISLQTLKKEYKSYEAKLRLLSSFDFFLTDARIRRLLPSLIGRHFYQRKKVPVSVNLLSKNLSREINDCIGGTVLNISKSGSCSAIRIGHVGMQIEHIIENIVAVTKGLSEKLPEKWESVKLLFVKTEKSAALPIFSSFVSNWDEATKRSLLNKKKKEARRKRRERNFEKQKERKKKRQQARKTASVLSKDDVAPESGDTTVKKPESKKEQTPEHGKKKRGRGKAQVKATNESEDEIPQLVPIGKKTPANEKVEIQKHATGKKSPAKSPNPSTPRGKKRKALPASETPKAAESETPGKSPEKKPKIKEEAVKEKSPSLGKKDARQTPKKPEAKFFTTPSKSVRKASHTPKKWPKKPKVPQST</sequence>
<feature type="chain" id="PRO_0000125844" description="Ribosomal L1 domain-containing protein 1">
    <location>
        <begin position="1"/>
        <end position="490"/>
    </location>
</feature>
<feature type="region of interest" description="Disordered" evidence="2">
    <location>
        <begin position="1"/>
        <end position="33"/>
    </location>
</feature>
<feature type="region of interest" description="Disordered" evidence="2">
    <location>
        <begin position="280"/>
        <end position="490"/>
    </location>
</feature>
<feature type="coiled-coil region" evidence="1">
    <location>
        <begin position="280"/>
        <end position="313"/>
    </location>
</feature>
<feature type="compositionally biased region" description="Low complexity" evidence="2">
    <location>
        <begin position="1"/>
        <end position="27"/>
    </location>
</feature>
<feature type="compositionally biased region" description="Basic residues" evidence="2">
    <location>
        <begin position="280"/>
        <end position="293"/>
    </location>
</feature>
<feature type="compositionally biased region" description="Basic and acidic residues" evidence="2">
    <location>
        <begin position="329"/>
        <end position="343"/>
    </location>
</feature>
<feature type="compositionally biased region" description="Basic residues" evidence="2">
    <location>
        <begin position="344"/>
        <end position="353"/>
    </location>
</feature>
<feature type="compositionally biased region" description="Basic and acidic residues" evidence="2">
    <location>
        <begin position="376"/>
        <end position="385"/>
    </location>
</feature>
<feature type="compositionally biased region" description="Basic and acidic residues" evidence="2">
    <location>
        <begin position="427"/>
        <end position="460"/>
    </location>
</feature>
<feature type="compositionally biased region" description="Basic residues" evidence="2">
    <location>
        <begin position="469"/>
        <end position="490"/>
    </location>
</feature>
<feature type="modified residue" description="N-acetylmethionine" evidence="9 17 22 23">
    <location>
        <position position="1"/>
    </location>
</feature>
<feature type="modified residue" description="Phosphothreonine" evidence="14 20">
    <location>
        <position position="340"/>
    </location>
</feature>
<feature type="modified residue" description="Phosphothreonine" evidence="15 21">
    <location>
        <position position="358"/>
    </location>
</feature>
<feature type="modified residue" description="Phosphoserine" evidence="15 19 20 21 24">
    <location>
        <position position="361"/>
    </location>
</feature>
<feature type="modified residue" description="Phosphothreonine" evidence="20">
    <location>
        <position position="375"/>
    </location>
</feature>
<feature type="modified residue" description="Phosphoserine" evidence="13 15 20">
    <location>
        <position position="392"/>
    </location>
</feature>
<feature type="modified residue" description="Phosphoserine" evidence="13 15 21">
    <location>
        <position position="396"/>
    </location>
</feature>
<feature type="modified residue" description="Phosphothreonine" evidence="15 24">
    <location>
        <position position="415"/>
    </location>
</feature>
<feature type="modified residue" description="Phosphothreonine" evidence="13 15">
    <location>
        <position position="423"/>
    </location>
</feature>
<feature type="modified residue" description="Phosphoserine" evidence="13 14 15 16 20 21 24">
    <location>
        <position position="427"/>
    </location>
</feature>
<feature type="modified residue" description="Phosphoserine" evidence="15">
    <location>
        <position position="443"/>
    </location>
</feature>
<feature type="modified residue" description="Phosphothreonine" evidence="15 24">
    <location>
        <position position="465"/>
    </location>
</feature>
<feature type="modified residue" description="N6-acetyllysine" evidence="18">
    <location>
        <position position="468"/>
    </location>
</feature>
<feature type="modified residue" description="Phosphoserine" evidence="13 15 24">
    <location>
        <position position="469"/>
    </location>
</feature>
<feature type="cross-link" description="Glycyl lysine isopeptide (Lys-Gly) (interchain with G-Cter in SUMO2)" evidence="26">
    <location>
        <position position="120"/>
    </location>
</feature>
<feature type="cross-link" description="Glycyl lysine isopeptide (Lys-Gly) (interchain with G-Cter in SUMO2)" evidence="26">
    <location>
        <position position="254"/>
    </location>
</feature>
<feature type="cross-link" description="Glycyl lysine isopeptide (Lys-Gly) (interchain with G-Cter in SUMO2)" evidence="26">
    <location>
        <position position="380"/>
    </location>
</feature>
<feature type="cross-link" description="Glycyl lysine isopeptide (Lys-Gly) (interchain with G-Cter in SUMO2)" evidence="25">
    <location>
        <position position="435"/>
    </location>
</feature>
<feature type="cross-link" description="Glycyl lysine isopeptide (Lys-Gly) (interchain with G-Cter in SUMO2)" evidence="26">
    <location>
        <position position="461"/>
    </location>
</feature>
<feature type="splice variant" id="VSP_056143" description="In isoform 2." evidence="10">
    <location>
        <begin position="1"/>
        <end position="220"/>
    </location>
</feature>
<feature type="sequence conflict" description="In Ref. 3; AAN46298." evidence="12" ref="3">
    <original>R</original>
    <variation>G</variation>
    <location>
        <position position="50"/>
    </location>
</feature>
<feature type="sequence conflict" description="In Ref. 8; CAB43231." evidence="12" ref="8">
    <original>N</original>
    <variation>D</variation>
    <location>
        <position position="189"/>
    </location>
</feature>
<feature type="sequence conflict" description="In Ref. 3; AAN46298." evidence="12" ref="3">
    <original>R</original>
    <variation>G</variation>
    <location>
        <position position="294"/>
    </location>
</feature>
<name>RL1D1_HUMAN</name>
<evidence type="ECO:0000255" key="1"/>
<evidence type="ECO:0000256" key="2">
    <source>
        <dbReference type="SAM" id="MobiDB-lite"/>
    </source>
</evidence>
<evidence type="ECO:0000269" key="3">
    <source>
    </source>
</evidence>
<evidence type="ECO:0000269" key="4">
    <source>
    </source>
</evidence>
<evidence type="ECO:0000269" key="5">
    <source>
    </source>
</evidence>
<evidence type="ECO:0000269" key="6">
    <source>
    </source>
</evidence>
<evidence type="ECO:0000269" key="7">
    <source>
    </source>
</evidence>
<evidence type="ECO:0000269" key="8">
    <source>
    </source>
</evidence>
<evidence type="ECO:0000269" key="9">
    <source ref="9"/>
</evidence>
<evidence type="ECO:0000303" key="10">
    <source>
    </source>
</evidence>
<evidence type="ECO:0000303" key="11">
    <source>
    </source>
</evidence>
<evidence type="ECO:0000305" key="12"/>
<evidence type="ECO:0007744" key="13">
    <source>
    </source>
</evidence>
<evidence type="ECO:0007744" key="14">
    <source>
    </source>
</evidence>
<evidence type="ECO:0007744" key="15">
    <source>
    </source>
</evidence>
<evidence type="ECO:0007744" key="16">
    <source>
    </source>
</evidence>
<evidence type="ECO:0007744" key="17">
    <source>
    </source>
</evidence>
<evidence type="ECO:0007744" key="18">
    <source>
    </source>
</evidence>
<evidence type="ECO:0007744" key="19">
    <source>
    </source>
</evidence>
<evidence type="ECO:0007744" key="20">
    <source>
    </source>
</evidence>
<evidence type="ECO:0007744" key="21">
    <source>
    </source>
</evidence>
<evidence type="ECO:0007744" key="22">
    <source>
    </source>
</evidence>
<evidence type="ECO:0007744" key="23">
    <source>
    </source>
</evidence>
<evidence type="ECO:0007744" key="24">
    <source>
    </source>
</evidence>
<evidence type="ECO:0007744" key="25">
    <source>
    </source>
</evidence>
<evidence type="ECO:0007744" key="26">
    <source>
    </source>
</evidence>
<gene>
    <name type="primary">RSL1D1</name>
    <name type="synonym">CATX11</name>
    <name evidence="11" type="synonym">CSIG</name>
    <name type="synonym">PBK1</name>
    <name type="ORF">L12</name>
</gene>
<comment type="function">
    <text evidence="5 6">Regulates cellular senescence through inhibition of PTEN translation. Acts as a pro-apoptotic regulator in response to DNA damage.</text>
</comment>
<comment type="subunit">
    <text evidence="6 7">Interacts with ING1 (isoform 2). Interacts with KPNA7 and KPNA2 (PubMed:36647821).</text>
</comment>
<comment type="interaction">
    <interactant intactId="EBI-358028">
        <id>O76021</id>
    </interactant>
    <interactant intactId="EBI-77321">
        <id>Q9UER7</id>
        <label>DAXX</label>
    </interactant>
    <organismsDiffer>false</organismsDiffer>
    <experiments>2</experiments>
</comment>
<comment type="interaction">
    <interactant intactId="EBI-358028">
        <id>O76021</id>
    </interactant>
    <interactant intactId="EBI-2878099">
        <id>Q9NW13</id>
        <label>RBM28</label>
    </interactant>
    <organismsDiffer>false</organismsDiffer>
    <experiments>2</experiments>
</comment>
<comment type="interaction">
    <interactant intactId="EBI-358028">
        <id>O76021</id>
    </interactant>
    <interactant intactId="EBI-354172">
        <id>P62424</id>
        <label>RPL7A</label>
    </interactant>
    <organismsDiffer>false</organismsDiffer>
    <experiments>3</experiments>
</comment>
<comment type="subcellular location">
    <subcellularLocation>
        <location evidence="3 4 5 6">Nucleus</location>
        <location evidence="3 4 5 6">Nucleolus</location>
    </subcellularLocation>
    <text evidence="6">Colocalizes with ING1 in the nucleolus after UV stress.</text>
</comment>
<comment type="alternative products">
    <event type="alternative splicing"/>
    <isoform>
        <id>O76021-1</id>
        <name>1</name>
        <sequence type="displayed"/>
    </isoform>
    <isoform>
        <id>O76021-2</id>
        <name>2</name>
        <sequence type="described" ref="VSP_056143"/>
    </isoform>
</comment>
<comment type="tissue specificity">
    <text evidence="5 8">Expressed at high intensities in the heart, skeletal muscle, and placenta.</text>
</comment>
<comment type="induction">
    <text evidence="5">Down-regulated during cellular senescence.</text>
</comment>
<comment type="similarity">
    <text evidence="12">Belongs to the universal ribosomal protein uL1 family. Highly divergent.</text>
</comment>
<comment type="sequence caution" evidence="12">
    <conflict type="frameshift">
        <sequence resource="EMBL-CDS" id="AAF98239"/>
    </conflict>
</comment>
<comment type="sequence caution" evidence="12">
    <conflict type="erroneous initiation">
        <sequence resource="EMBL-CDS" id="AAH19069"/>
    </conflict>
</comment>
<comment type="sequence caution" evidence="12">
    <conflict type="frameshift">
        <sequence resource="EMBL-CDS" id="CAA07491"/>
    </conflict>
</comment>
<protein>
    <recommendedName>
        <fullName>Ribosomal L1 domain-containing protein 1</fullName>
    </recommendedName>
    <alternativeName>
        <fullName>CATX-11</fullName>
    </alternativeName>
    <alternativeName>
        <fullName evidence="11">Cellular senescence-inhibited gene protein</fullName>
    </alternativeName>
    <alternativeName>
        <fullName>Protein PBK1</fullName>
    </alternativeName>
</protein>
<dbReference type="EMBL" id="AJ007398">
    <property type="protein sequence ID" value="CAA07491.1"/>
    <property type="status" value="ALT_FRAME"/>
    <property type="molecule type" value="mRNA"/>
</dbReference>
<dbReference type="EMBL" id="AY598331">
    <property type="protein sequence ID" value="AAT06742.1"/>
    <property type="molecule type" value="mRNA"/>
</dbReference>
<dbReference type="EMBL" id="AY154473">
    <property type="protein sequence ID" value="AAN46298.1"/>
    <property type="molecule type" value="mRNA"/>
</dbReference>
<dbReference type="EMBL" id="AK295935">
    <property type="protein sequence ID" value="BAG58720.1"/>
    <property type="molecule type" value="mRNA"/>
</dbReference>
<dbReference type="EMBL" id="AC010654">
    <property type="status" value="NOT_ANNOTATED_CDS"/>
    <property type="molecule type" value="Genomic_DNA"/>
</dbReference>
<dbReference type="EMBL" id="CH471112">
    <property type="protein sequence ID" value="EAW85133.1"/>
    <property type="molecule type" value="Genomic_DNA"/>
</dbReference>
<dbReference type="EMBL" id="CH471112">
    <property type="protein sequence ID" value="EAW85135.1"/>
    <property type="molecule type" value="Genomic_DNA"/>
</dbReference>
<dbReference type="EMBL" id="BC019069">
    <property type="protein sequence ID" value="AAH19069.2"/>
    <property type="status" value="ALT_INIT"/>
    <property type="molecule type" value="mRNA"/>
</dbReference>
<dbReference type="EMBL" id="BC112228">
    <property type="protein sequence ID" value="AAI12229.1"/>
    <property type="molecule type" value="mRNA"/>
</dbReference>
<dbReference type="EMBL" id="BC113699">
    <property type="protein sequence ID" value="AAI13700.1"/>
    <property type="molecule type" value="mRNA"/>
</dbReference>
<dbReference type="EMBL" id="AL049999">
    <property type="protein sequence ID" value="CAB43231.2"/>
    <property type="molecule type" value="mRNA"/>
</dbReference>
<dbReference type="EMBL" id="AF083127">
    <property type="protein sequence ID" value="AAF98239.1"/>
    <property type="status" value="ALT_FRAME"/>
    <property type="molecule type" value="mRNA"/>
</dbReference>
<dbReference type="CCDS" id="CCDS10551.1">
    <molecule id="O76021-1"/>
</dbReference>
<dbReference type="PIR" id="T08693">
    <property type="entry name" value="T08693"/>
</dbReference>
<dbReference type="RefSeq" id="NP_056474.2">
    <molecule id="O76021-1"/>
    <property type="nucleotide sequence ID" value="NM_015659.3"/>
</dbReference>
<dbReference type="PDB" id="8FKP">
    <property type="method" value="EM"/>
    <property type="resolution" value="2.85 A"/>
    <property type="chains" value="SL=1-490"/>
</dbReference>
<dbReference type="PDB" id="8FKQ">
    <property type="method" value="EM"/>
    <property type="resolution" value="2.76 A"/>
    <property type="chains" value="SL=1-490"/>
</dbReference>
<dbReference type="PDB" id="8FKR">
    <property type="method" value="EM"/>
    <property type="resolution" value="2.89 A"/>
    <property type="chains" value="SL=1-490"/>
</dbReference>
<dbReference type="PDB" id="8FKS">
    <property type="method" value="EM"/>
    <property type="resolution" value="2.88 A"/>
    <property type="chains" value="SL=1-490"/>
</dbReference>
<dbReference type="PDB" id="8FKT">
    <property type="method" value="EM"/>
    <property type="resolution" value="2.81 A"/>
    <property type="chains" value="SL=1-490"/>
</dbReference>
<dbReference type="PDB" id="8FKU">
    <property type="method" value="EM"/>
    <property type="resolution" value="2.82 A"/>
    <property type="chains" value="SL=1-490"/>
</dbReference>
<dbReference type="PDB" id="8FKV">
    <property type="method" value="EM"/>
    <property type="resolution" value="2.47 A"/>
    <property type="chains" value="SL=1-490"/>
</dbReference>
<dbReference type="PDB" id="8FKW">
    <property type="method" value="EM"/>
    <property type="resolution" value="2.50 A"/>
    <property type="chains" value="SL=1-490"/>
</dbReference>
<dbReference type="PDB" id="8FKX">
    <property type="method" value="EM"/>
    <property type="resolution" value="2.59 A"/>
    <property type="chains" value="SL=1-490"/>
</dbReference>
<dbReference type="PDB" id="8FKY">
    <property type="method" value="EM"/>
    <property type="resolution" value="2.67 A"/>
    <property type="chains" value="SL=1-490"/>
</dbReference>
<dbReference type="PDB" id="8FKZ">
    <property type="method" value="EM"/>
    <property type="resolution" value="3.04 A"/>
    <property type="chains" value="SL=1-490"/>
</dbReference>
<dbReference type="PDB" id="8FL2">
    <property type="method" value="EM"/>
    <property type="resolution" value="2.67 A"/>
    <property type="chains" value="SL=1-490"/>
</dbReference>
<dbReference type="PDB" id="8FL6">
    <property type="method" value="EM"/>
    <property type="resolution" value="2.62 A"/>
    <property type="chains" value="SL=1-490"/>
</dbReference>
<dbReference type="PDB" id="8FLA">
    <property type="method" value="EM"/>
    <property type="resolution" value="2.63 A"/>
    <property type="chains" value="SL=1-490"/>
</dbReference>
<dbReference type="PDB" id="8FLD">
    <property type="method" value="EM"/>
    <property type="resolution" value="2.58 A"/>
    <property type="chains" value="SL=1-490"/>
</dbReference>
<dbReference type="PDB" id="8INE">
    <property type="method" value="EM"/>
    <property type="resolution" value="3.20 A"/>
    <property type="chains" value="u=1-490"/>
</dbReference>
<dbReference type="PDB" id="8INF">
    <property type="method" value="EM"/>
    <property type="resolution" value="3.00 A"/>
    <property type="chains" value="u=1-490"/>
</dbReference>
<dbReference type="PDB" id="8IPX">
    <property type="method" value="EM"/>
    <property type="resolution" value="4.30 A"/>
    <property type="chains" value="N=1-490"/>
</dbReference>
<dbReference type="PDB" id="8IPY">
    <property type="method" value="EM"/>
    <property type="resolution" value="3.20 A"/>
    <property type="chains" value="c=1-490"/>
</dbReference>
<dbReference type="PDB" id="8IR3">
    <property type="method" value="EM"/>
    <property type="resolution" value="3.50 A"/>
    <property type="chains" value="s=1-490"/>
</dbReference>
<dbReference type="PDBsum" id="8FKP"/>
<dbReference type="PDBsum" id="8FKQ"/>
<dbReference type="PDBsum" id="8FKR"/>
<dbReference type="PDBsum" id="8FKS"/>
<dbReference type="PDBsum" id="8FKT"/>
<dbReference type="PDBsum" id="8FKU"/>
<dbReference type="PDBsum" id="8FKV"/>
<dbReference type="PDBsum" id="8FKW"/>
<dbReference type="PDBsum" id="8FKX"/>
<dbReference type="PDBsum" id="8FKY"/>
<dbReference type="PDBsum" id="8FKZ"/>
<dbReference type="PDBsum" id="8FL2"/>
<dbReference type="PDBsum" id="8FL6"/>
<dbReference type="PDBsum" id="8FLA"/>
<dbReference type="PDBsum" id="8FLD"/>
<dbReference type="PDBsum" id="8INE"/>
<dbReference type="PDBsum" id="8INF"/>
<dbReference type="PDBsum" id="8IPX"/>
<dbReference type="PDBsum" id="8IPY"/>
<dbReference type="PDBsum" id="8IR3"/>
<dbReference type="EMDB" id="EMD-29252"/>
<dbReference type="EMDB" id="EMD-29253"/>
<dbReference type="EMDB" id="EMD-29254"/>
<dbReference type="EMDB" id="EMD-29255"/>
<dbReference type="EMDB" id="EMD-29256"/>
<dbReference type="EMDB" id="EMD-29257"/>
<dbReference type="EMDB" id="EMD-29258"/>
<dbReference type="EMDB" id="EMD-29259"/>
<dbReference type="EMDB" id="EMD-29260"/>
<dbReference type="EMDB" id="EMD-29261"/>
<dbReference type="EMDB" id="EMD-29262"/>
<dbReference type="EMDB" id="EMD-29265"/>
<dbReference type="EMDB" id="EMD-29268"/>
<dbReference type="EMDB" id="EMD-29272"/>
<dbReference type="EMDB" id="EMD-29275"/>
<dbReference type="EMDB" id="EMD-35596"/>
<dbReference type="EMDB" id="EMD-35597"/>
<dbReference type="EMDB" id="EMD-35649"/>
<dbReference type="EMDB" id="EMD-35651"/>
<dbReference type="EMDB" id="EMD-35673"/>
<dbReference type="SMR" id="O76021"/>
<dbReference type="BioGRID" id="117587">
    <property type="interactions" value="557"/>
</dbReference>
<dbReference type="CORUM" id="O76021"/>
<dbReference type="FunCoup" id="O76021">
    <property type="interactions" value="2140"/>
</dbReference>
<dbReference type="IntAct" id="O76021">
    <property type="interactions" value="297"/>
</dbReference>
<dbReference type="MINT" id="O76021"/>
<dbReference type="STRING" id="9606.ENSP00000460871"/>
<dbReference type="ChEMBL" id="CHEMBL1075139"/>
<dbReference type="GlyGen" id="O76021">
    <property type="glycosylation" value="2 sites, 1 O-linked glycan (2 sites)"/>
</dbReference>
<dbReference type="iPTMnet" id="O76021"/>
<dbReference type="MetOSite" id="O76021"/>
<dbReference type="PhosphoSitePlus" id="O76021"/>
<dbReference type="SwissPalm" id="O76021"/>
<dbReference type="BioMuta" id="RSL1D1"/>
<dbReference type="jPOST" id="O76021"/>
<dbReference type="MassIVE" id="O76021"/>
<dbReference type="PaxDb" id="9606-ENSP00000460871"/>
<dbReference type="PeptideAtlas" id="O76021"/>
<dbReference type="ProteomicsDB" id="4349"/>
<dbReference type="ProteomicsDB" id="50348">
    <molecule id="O76021-1"/>
</dbReference>
<dbReference type="Pumba" id="O76021"/>
<dbReference type="Antibodypedia" id="11546">
    <property type="antibodies" value="147 antibodies from 29 providers"/>
</dbReference>
<dbReference type="DNASU" id="26156"/>
<dbReference type="Ensembl" id="ENST00000571133.6">
    <molecule id="O76021-1"/>
    <property type="protein sequence ID" value="ENSP00000460871.1"/>
    <property type="gene ID" value="ENSG00000171490.13"/>
</dbReference>
<dbReference type="GeneID" id="26156"/>
<dbReference type="KEGG" id="hsa:26156"/>
<dbReference type="MANE-Select" id="ENST00000571133.6">
    <property type="protein sequence ID" value="ENSP00000460871.1"/>
    <property type="RefSeq nucleotide sequence ID" value="NM_015659.3"/>
    <property type="RefSeq protein sequence ID" value="NP_056474.2"/>
</dbReference>
<dbReference type="UCSC" id="uc002dbp.3">
    <molecule id="O76021-1"/>
    <property type="organism name" value="human"/>
</dbReference>
<dbReference type="AGR" id="HGNC:24534"/>
<dbReference type="CTD" id="26156"/>
<dbReference type="DisGeNET" id="26156"/>
<dbReference type="GeneCards" id="RSL1D1"/>
<dbReference type="HGNC" id="HGNC:24534">
    <property type="gene designation" value="RSL1D1"/>
</dbReference>
<dbReference type="HPA" id="ENSG00000171490">
    <property type="expression patterns" value="Low tissue specificity"/>
</dbReference>
<dbReference type="MIM" id="615874">
    <property type="type" value="gene"/>
</dbReference>
<dbReference type="neXtProt" id="NX_O76021"/>
<dbReference type="OpenTargets" id="ENSG00000171490"/>
<dbReference type="PharmGKB" id="PA142670966"/>
<dbReference type="VEuPathDB" id="HostDB:ENSG00000171490"/>
<dbReference type="eggNOG" id="KOG1685">
    <property type="taxonomic scope" value="Eukaryota"/>
</dbReference>
<dbReference type="GeneTree" id="ENSGT00440000038603"/>
<dbReference type="InParanoid" id="O76021"/>
<dbReference type="OMA" id="GHTGMQA"/>
<dbReference type="OrthoDB" id="10251727at2759"/>
<dbReference type="PAN-GO" id="O76021">
    <property type="GO annotations" value="3 GO annotations based on evolutionary models"/>
</dbReference>
<dbReference type="PhylomeDB" id="O76021"/>
<dbReference type="TreeFam" id="TF354254"/>
<dbReference type="PathwayCommons" id="O76021"/>
<dbReference type="SignaLink" id="O76021"/>
<dbReference type="BioGRID-ORCS" id="26156">
    <property type="hits" value="784 hits in 1172 CRISPR screens"/>
</dbReference>
<dbReference type="CD-CODE" id="91857CE7">
    <property type="entry name" value="Nucleolus"/>
</dbReference>
<dbReference type="ChiTaRS" id="RSL1D1">
    <property type="organism name" value="human"/>
</dbReference>
<dbReference type="GeneWiki" id="RSL1D1"/>
<dbReference type="GenomeRNAi" id="26156"/>
<dbReference type="Pharos" id="O76021">
    <property type="development level" value="Tbio"/>
</dbReference>
<dbReference type="PRO" id="PR:O76021"/>
<dbReference type="Proteomes" id="UP000005640">
    <property type="component" value="Chromosome 16"/>
</dbReference>
<dbReference type="RNAct" id="O76021">
    <property type="molecule type" value="protein"/>
</dbReference>
<dbReference type="Bgee" id="ENSG00000171490">
    <property type="expression patterns" value="Expressed in calcaneal tendon and 211 other cell types or tissues"/>
</dbReference>
<dbReference type="ExpressionAtlas" id="O76021">
    <property type="expression patterns" value="baseline and differential"/>
</dbReference>
<dbReference type="GO" id="GO:0005694">
    <property type="term" value="C:chromosome"/>
    <property type="evidence" value="ECO:0000314"/>
    <property type="project" value="HPA"/>
</dbReference>
<dbReference type="GO" id="GO:0005929">
    <property type="term" value="C:cilium"/>
    <property type="evidence" value="ECO:0000314"/>
    <property type="project" value="HPA"/>
</dbReference>
<dbReference type="GO" id="GO:0005829">
    <property type="term" value="C:cytosol"/>
    <property type="evidence" value="ECO:0000314"/>
    <property type="project" value="HPA"/>
</dbReference>
<dbReference type="GO" id="GO:0043231">
    <property type="term" value="C:intracellular membrane-bounded organelle"/>
    <property type="evidence" value="ECO:0000314"/>
    <property type="project" value="HPA"/>
</dbReference>
<dbReference type="GO" id="GO:0016020">
    <property type="term" value="C:membrane"/>
    <property type="evidence" value="ECO:0007005"/>
    <property type="project" value="UniProtKB"/>
</dbReference>
<dbReference type="GO" id="GO:0005730">
    <property type="term" value="C:nucleolus"/>
    <property type="evidence" value="ECO:0000314"/>
    <property type="project" value="HPA"/>
</dbReference>
<dbReference type="GO" id="GO:0045296">
    <property type="term" value="F:cadherin binding"/>
    <property type="evidence" value="ECO:0007005"/>
    <property type="project" value="BHF-UCL"/>
</dbReference>
<dbReference type="GO" id="GO:0003730">
    <property type="term" value="F:mRNA 3'-UTR binding"/>
    <property type="evidence" value="ECO:0000314"/>
    <property type="project" value="CAFA"/>
</dbReference>
<dbReference type="GO" id="GO:0048027">
    <property type="term" value="F:mRNA 5'-UTR binding"/>
    <property type="evidence" value="ECO:0000314"/>
    <property type="project" value="CAFA"/>
</dbReference>
<dbReference type="GO" id="GO:0003723">
    <property type="term" value="F:RNA binding"/>
    <property type="evidence" value="ECO:0007005"/>
    <property type="project" value="UniProtKB"/>
</dbReference>
<dbReference type="GO" id="GO:0001649">
    <property type="term" value="P:osteoblast differentiation"/>
    <property type="evidence" value="ECO:0007005"/>
    <property type="project" value="UniProtKB"/>
</dbReference>
<dbReference type="GO" id="GO:0042981">
    <property type="term" value="P:regulation of apoptotic process"/>
    <property type="evidence" value="ECO:0000314"/>
    <property type="project" value="UniProtKB"/>
</dbReference>
<dbReference type="GO" id="GO:2000772">
    <property type="term" value="P:regulation of cellular senescence"/>
    <property type="evidence" value="ECO:0000314"/>
    <property type="project" value="UniProtKB"/>
</dbReference>
<dbReference type="GO" id="GO:0032880">
    <property type="term" value="P:regulation of protein localization"/>
    <property type="evidence" value="ECO:0000315"/>
    <property type="project" value="MGI"/>
</dbReference>
<dbReference type="CDD" id="cd00403">
    <property type="entry name" value="Ribosomal_L1"/>
    <property type="match status" value="1"/>
</dbReference>
<dbReference type="FunFam" id="3.40.50.790:FF:000004">
    <property type="entry name" value="Ribosomal L1 domain-containing 1-like 1"/>
    <property type="match status" value="1"/>
</dbReference>
<dbReference type="Gene3D" id="3.30.190.20">
    <property type="match status" value="1"/>
</dbReference>
<dbReference type="Gene3D" id="3.40.50.790">
    <property type="match status" value="1"/>
</dbReference>
<dbReference type="InterPro" id="IPR023674">
    <property type="entry name" value="Ribosomal_uL1-like"/>
</dbReference>
<dbReference type="InterPro" id="IPR028364">
    <property type="entry name" value="Ribosomal_uL1/biogenesis"/>
</dbReference>
<dbReference type="InterPro" id="IPR016095">
    <property type="entry name" value="Ribosomal_uL1_3-a/b-sand"/>
</dbReference>
<dbReference type="Pfam" id="PF00687">
    <property type="entry name" value="Ribosomal_L1"/>
    <property type="match status" value="1"/>
</dbReference>
<dbReference type="SUPFAM" id="SSF56808">
    <property type="entry name" value="Ribosomal protein L1"/>
    <property type="match status" value="1"/>
</dbReference>
<reference key="1">
    <citation type="journal article" date="1998" name="Placenta">
        <title>Identification of differentially expressed genes in human trophoblast cells by DDRT-PCR.</title>
        <authorList>
            <person name="Huch G."/>
            <person name="Hohn H.-P."/>
            <person name="Denker H.-W."/>
        </authorList>
    </citation>
    <scope>NUCLEOTIDE SEQUENCE [MRNA] (ISOFORM 1)</scope>
    <scope>TISSUE SPECIFICITY</scope>
    <source>
        <tissue>Placenta</tissue>
    </source>
</reference>
<reference key="2">
    <citation type="journal article" date="2004" name="Oncogene">
        <title>Suppression subtractive hybridization and expression profiling identifies a unique set of genes overexpressed in non-small-cell lung cancer.</title>
        <authorList>
            <person name="Petroziello J."/>
            <person name="Yamane A."/>
            <person name="Westendorf L."/>
            <person name="Thompson M."/>
            <person name="McDonagh C."/>
            <person name="Cerveny C."/>
            <person name="Law C.-L."/>
            <person name="Wahl A."/>
            <person name="Carter P."/>
        </authorList>
    </citation>
    <scope>NUCLEOTIDE SEQUENCE [MRNA] (ISOFORM 1)</scope>
</reference>
<reference key="3">
    <citation type="submission" date="2002-09" db="EMBL/GenBank/DDBJ databases">
        <title>Identification of a new gene associated with cellular senescence in human diploid fibroblast.</title>
        <authorList>
            <person name="Guo S.-Z."/>
            <person name="Zhang Z.-Y."/>
            <person name="Tong T.-J."/>
        </authorList>
    </citation>
    <scope>NUCLEOTIDE SEQUENCE [MRNA] (ISOFORM 1)</scope>
    <source>
        <tissue>Lung</tissue>
    </source>
</reference>
<reference key="4">
    <citation type="journal article" date="2004" name="Nat. Genet.">
        <title>Complete sequencing and characterization of 21,243 full-length human cDNAs.</title>
        <authorList>
            <person name="Ota T."/>
            <person name="Suzuki Y."/>
            <person name="Nishikawa T."/>
            <person name="Otsuki T."/>
            <person name="Sugiyama T."/>
            <person name="Irie R."/>
            <person name="Wakamatsu A."/>
            <person name="Hayashi K."/>
            <person name="Sato H."/>
            <person name="Nagai K."/>
            <person name="Kimura K."/>
            <person name="Makita H."/>
            <person name="Sekine M."/>
            <person name="Obayashi M."/>
            <person name="Nishi T."/>
            <person name="Shibahara T."/>
            <person name="Tanaka T."/>
            <person name="Ishii S."/>
            <person name="Yamamoto J."/>
            <person name="Saito K."/>
            <person name="Kawai Y."/>
            <person name="Isono Y."/>
            <person name="Nakamura Y."/>
            <person name="Nagahari K."/>
            <person name="Murakami K."/>
            <person name="Yasuda T."/>
            <person name="Iwayanagi T."/>
            <person name="Wagatsuma M."/>
            <person name="Shiratori A."/>
            <person name="Sudo H."/>
            <person name="Hosoiri T."/>
            <person name="Kaku Y."/>
            <person name="Kodaira H."/>
            <person name="Kondo H."/>
            <person name="Sugawara M."/>
            <person name="Takahashi M."/>
            <person name="Kanda K."/>
            <person name="Yokoi T."/>
            <person name="Furuya T."/>
            <person name="Kikkawa E."/>
            <person name="Omura Y."/>
            <person name="Abe K."/>
            <person name="Kamihara K."/>
            <person name="Katsuta N."/>
            <person name="Sato K."/>
            <person name="Tanikawa M."/>
            <person name="Yamazaki M."/>
            <person name="Ninomiya K."/>
            <person name="Ishibashi T."/>
            <person name="Yamashita H."/>
            <person name="Murakawa K."/>
            <person name="Fujimori K."/>
            <person name="Tanai H."/>
            <person name="Kimata M."/>
            <person name="Watanabe M."/>
            <person name="Hiraoka S."/>
            <person name="Chiba Y."/>
            <person name="Ishida S."/>
            <person name="Ono Y."/>
            <person name="Takiguchi S."/>
            <person name="Watanabe S."/>
            <person name="Yosida M."/>
            <person name="Hotuta T."/>
            <person name="Kusano J."/>
            <person name="Kanehori K."/>
            <person name="Takahashi-Fujii A."/>
            <person name="Hara H."/>
            <person name="Tanase T.-O."/>
            <person name="Nomura Y."/>
            <person name="Togiya S."/>
            <person name="Komai F."/>
            <person name="Hara R."/>
            <person name="Takeuchi K."/>
            <person name="Arita M."/>
            <person name="Imose N."/>
            <person name="Musashino K."/>
            <person name="Yuuki H."/>
            <person name="Oshima A."/>
            <person name="Sasaki N."/>
            <person name="Aotsuka S."/>
            <person name="Yoshikawa Y."/>
            <person name="Matsunawa H."/>
            <person name="Ichihara T."/>
            <person name="Shiohata N."/>
            <person name="Sano S."/>
            <person name="Moriya S."/>
            <person name="Momiyama H."/>
            <person name="Satoh N."/>
            <person name="Takami S."/>
            <person name="Terashima Y."/>
            <person name="Suzuki O."/>
            <person name="Nakagawa S."/>
            <person name="Senoh A."/>
            <person name="Mizoguchi H."/>
            <person name="Goto Y."/>
            <person name="Shimizu F."/>
            <person name="Wakebe H."/>
            <person name="Hishigaki H."/>
            <person name="Watanabe T."/>
            <person name="Sugiyama A."/>
            <person name="Takemoto M."/>
            <person name="Kawakami B."/>
            <person name="Yamazaki M."/>
            <person name="Watanabe K."/>
            <person name="Kumagai A."/>
            <person name="Itakura S."/>
            <person name="Fukuzumi Y."/>
            <person name="Fujimori Y."/>
            <person name="Komiyama M."/>
            <person name="Tashiro H."/>
            <person name="Tanigami A."/>
            <person name="Fujiwara T."/>
            <person name="Ono T."/>
            <person name="Yamada K."/>
            <person name="Fujii Y."/>
            <person name="Ozaki K."/>
            <person name="Hirao M."/>
            <person name="Ohmori Y."/>
            <person name="Kawabata A."/>
            <person name="Hikiji T."/>
            <person name="Kobatake N."/>
            <person name="Inagaki H."/>
            <person name="Ikema Y."/>
            <person name="Okamoto S."/>
            <person name="Okitani R."/>
            <person name="Kawakami T."/>
            <person name="Noguchi S."/>
            <person name="Itoh T."/>
            <person name="Shigeta K."/>
            <person name="Senba T."/>
            <person name="Matsumura K."/>
            <person name="Nakajima Y."/>
            <person name="Mizuno T."/>
            <person name="Morinaga M."/>
            <person name="Sasaki M."/>
            <person name="Togashi T."/>
            <person name="Oyama M."/>
            <person name="Hata H."/>
            <person name="Watanabe M."/>
            <person name="Komatsu T."/>
            <person name="Mizushima-Sugano J."/>
            <person name="Satoh T."/>
            <person name="Shirai Y."/>
            <person name="Takahashi Y."/>
            <person name="Nakagawa K."/>
            <person name="Okumura K."/>
            <person name="Nagase T."/>
            <person name="Nomura N."/>
            <person name="Kikuchi H."/>
            <person name="Masuho Y."/>
            <person name="Yamashita R."/>
            <person name="Nakai K."/>
            <person name="Yada T."/>
            <person name="Nakamura Y."/>
            <person name="Ohara O."/>
            <person name="Isogai T."/>
            <person name="Sugano S."/>
        </authorList>
    </citation>
    <scope>NUCLEOTIDE SEQUENCE [LARGE SCALE MRNA] (ISOFORM 2)</scope>
    <source>
        <tissue>Substantia nigra</tissue>
    </source>
</reference>
<reference key="5">
    <citation type="journal article" date="2004" name="Nature">
        <title>The sequence and analysis of duplication-rich human chromosome 16.</title>
        <authorList>
            <person name="Martin J."/>
            <person name="Han C."/>
            <person name="Gordon L.A."/>
            <person name="Terry A."/>
            <person name="Prabhakar S."/>
            <person name="She X."/>
            <person name="Xie G."/>
            <person name="Hellsten U."/>
            <person name="Chan Y.M."/>
            <person name="Altherr M."/>
            <person name="Couronne O."/>
            <person name="Aerts A."/>
            <person name="Bajorek E."/>
            <person name="Black S."/>
            <person name="Blumer H."/>
            <person name="Branscomb E."/>
            <person name="Brown N.C."/>
            <person name="Bruno W.J."/>
            <person name="Buckingham J.M."/>
            <person name="Callen D.F."/>
            <person name="Campbell C.S."/>
            <person name="Campbell M.L."/>
            <person name="Campbell E.W."/>
            <person name="Caoile C."/>
            <person name="Challacombe J.F."/>
            <person name="Chasteen L.A."/>
            <person name="Chertkov O."/>
            <person name="Chi H.C."/>
            <person name="Christensen M."/>
            <person name="Clark L.M."/>
            <person name="Cohn J.D."/>
            <person name="Denys M."/>
            <person name="Detter J.C."/>
            <person name="Dickson M."/>
            <person name="Dimitrijevic-Bussod M."/>
            <person name="Escobar J."/>
            <person name="Fawcett J.J."/>
            <person name="Flowers D."/>
            <person name="Fotopulos D."/>
            <person name="Glavina T."/>
            <person name="Gomez M."/>
            <person name="Gonzales E."/>
            <person name="Goodstein D."/>
            <person name="Goodwin L.A."/>
            <person name="Grady D.L."/>
            <person name="Grigoriev I."/>
            <person name="Groza M."/>
            <person name="Hammon N."/>
            <person name="Hawkins T."/>
            <person name="Haydu L."/>
            <person name="Hildebrand C.E."/>
            <person name="Huang W."/>
            <person name="Israni S."/>
            <person name="Jett J."/>
            <person name="Jewett P.B."/>
            <person name="Kadner K."/>
            <person name="Kimball H."/>
            <person name="Kobayashi A."/>
            <person name="Krawczyk M.-C."/>
            <person name="Leyba T."/>
            <person name="Longmire J.L."/>
            <person name="Lopez F."/>
            <person name="Lou Y."/>
            <person name="Lowry S."/>
            <person name="Ludeman T."/>
            <person name="Manohar C.F."/>
            <person name="Mark G.A."/>
            <person name="McMurray K.L."/>
            <person name="Meincke L.J."/>
            <person name="Morgan J."/>
            <person name="Moyzis R.K."/>
            <person name="Mundt M.O."/>
            <person name="Munk A.C."/>
            <person name="Nandkeshwar R.D."/>
            <person name="Pitluck S."/>
            <person name="Pollard M."/>
            <person name="Predki P."/>
            <person name="Parson-Quintana B."/>
            <person name="Ramirez L."/>
            <person name="Rash S."/>
            <person name="Retterer J."/>
            <person name="Ricke D.O."/>
            <person name="Robinson D.L."/>
            <person name="Rodriguez A."/>
            <person name="Salamov A."/>
            <person name="Saunders E.H."/>
            <person name="Scott D."/>
            <person name="Shough T."/>
            <person name="Stallings R.L."/>
            <person name="Stalvey M."/>
            <person name="Sutherland R.D."/>
            <person name="Tapia R."/>
            <person name="Tesmer J.G."/>
            <person name="Thayer N."/>
            <person name="Thompson L.S."/>
            <person name="Tice H."/>
            <person name="Torney D.C."/>
            <person name="Tran-Gyamfi M."/>
            <person name="Tsai M."/>
            <person name="Ulanovsky L.E."/>
            <person name="Ustaszewska A."/>
            <person name="Vo N."/>
            <person name="White P.S."/>
            <person name="Williams A.L."/>
            <person name="Wills P.L."/>
            <person name="Wu J.-R."/>
            <person name="Wu K."/>
            <person name="Yang J."/>
            <person name="DeJong P."/>
            <person name="Bruce D."/>
            <person name="Doggett N.A."/>
            <person name="Deaven L."/>
            <person name="Schmutz J."/>
            <person name="Grimwood J."/>
            <person name="Richardson P."/>
            <person name="Rokhsar D.S."/>
            <person name="Eichler E.E."/>
            <person name="Gilna P."/>
            <person name="Lucas S.M."/>
            <person name="Myers R.M."/>
            <person name="Rubin E.M."/>
            <person name="Pennacchio L.A."/>
        </authorList>
    </citation>
    <scope>NUCLEOTIDE SEQUENCE [LARGE SCALE GENOMIC DNA]</scope>
</reference>
<reference key="6">
    <citation type="submission" date="2005-09" db="EMBL/GenBank/DDBJ databases">
        <authorList>
            <person name="Mural R.J."/>
            <person name="Istrail S."/>
            <person name="Sutton G.G."/>
            <person name="Florea L."/>
            <person name="Halpern A.L."/>
            <person name="Mobarry C.M."/>
            <person name="Lippert R."/>
            <person name="Walenz B."/>
            <person name="Shatkay H."/>
            <person name="Dew I."/>
            <person name="Miller J.R."/>
            <person name="Flanigan M.J."/>
            <person name="Edwards N.J."/>
            <person name="Bolanos R."/>
            <person name="Fasulo D."/>
            <person name="Halldorsson B.V."/>
            <person name="Hannenhalli S."/>
            <person name="Turner R."/>
            <person name="Yooseph S."/>
            <person name="Lu F."/>
            <person name="Nusskern D.R."/>
            <person name="Shue B.C."/>
            <person name="Zheng X.H."/>
            <person name="Zhong F."/>
            <person name="Delcher A.L."/>
            <person name="Huson D.H."/>
            <person name="Kravitz S.A."/>
            <person name="Mouchard L."/>
            <person name="Reinert K."/>
            <person name="Remington K.A."/>
            <person name="Clark A.G."/>
            <person name="Waterman M.S."/>
            <person name="Eichler E.E."/>
            <person name="Adams M.D."/>
            <person name="Hunkapiller M.W."/>
            <person name="Myers E.W."/>
            <person name="Venter J.C."/>
        </authorList>
    </citation>
    <scope>NUCLEOTIDE SEQUENCE [LARGE SCALE GENOMIC DNA]</scope>
</reference>
<reference key="7">
    <citation type="journal article" date="2004" name="Genome Res.">
        <title>The status, quality, and expansion of the NIH full-length cDNA project: the Mammalian Gene Collection (MGC).</title>
        <authorList>
            <consortium name="The MGC Project Team"/>
        </authorList>
    </citation>
    <scope>NUCLEOTIDE SEQUENCE [LARGE SCALE MRNA] (ISOFORM 1)</scope>
    <source>
        <tissue>Brain</tissue>
        <tissue>Lung</tissue>
    </source>
</reference>
<reference key="8">
    <citation type="journal article" date="2007" name="BMC Genomics">
        <title>The full-ORF clone resource of the German cDNA consortium.</title>
        <authorList>
            <person name="Bechtel S."/>
            <person name="Rosenfelder H."/>
            <person name="Duda A."/>
            <person name="Schmidt C.P."/>
            <person name="Ernst U."/>
            <person name="Wellenreuther R."/>
            <person name="Mehrle A."/>
            <person name="Schuster C."/>
            <person name="Bahr A."/>
            <person name="Bloecker H."/>
            <person name="Heubner D."/>
            <person name="Hoerlein A."/>
            <person name="Michel G."/>
            <person name="Wedler H."/>
            <person name="Koehrer K."/>
            <person name="Ottenwaelder B."/>
            <person name="Poustka A."/>
            <person name="Wiemann S."/>
            <person name="Schupp I."/>
        </authorList>
    </citation>
    <scope>NUCLEOTIDE SEQUENCE [LARGE SCALE MRNA] OF 1-290 (ISOFORM 1)</scope>
    <source>
        <tissue>Brain</tissue>
    </source>
</reference>
<reference key="9">
    <citation type="submission" date="2009-03" db="UniProtKB">
        <authorList>
            <person name="Bienvenut W.V."/>
            <person name="Waridel P."/>
            <person name="Quadroni M."/>
        </authorList>
    </citation>
    <scope>PROTEIN SEQUENCE OF 1-28; 90-100; 125-136; 148-160; 164-171; 179-188; 193-207 AND 258-276</scope>
    <scope>ACETYLATION AT MET-1</scope>
    <scope>IDENTIFICATION BY MASS SPECTROMETRY</scope>
    <source>
        <tissue>Cervix carcinoma</tissue>
    </source>
</reference>
<reference key="10">
    <citation type="submission" date="1998-08" db="EMBL/GenBank/DDBJ databases">
        <title>Isolation of novel genes from human colonic epithelial cells.</title>
        <authorList>
            <person name="Kairo A."/>
            <person name="Wang L."/>
            <person name="Gao Z.Q."/>
            <person name="Gao Z.P."/>
            <person name="Boman B.M."/>
        </authorList>
    </citation>
    <scope>NUCLEOTIDE SEQUENCE [MRNA] OF 76-401 (ISOFORM 1)</scope>
    <source>
        <tissue>Colon</tissue>
    </source>
</reference>
<reference key="11">
    <citation type="journal article" date="2002" name="Mol. Biol. Cell">
        <title>Functional proteomic analysis of human nucleolus.</title>
        <authorList>
            <person name="Scherl A."/>
            <person name="Coute Y."/>
            <person name="Deon C."/>
            <person name="Calle A."/>
            <person name="Kindbeiter K."/>
            <person name="Sanchez J.-C."/>
            <person name="Greco A."/>
            <person name="Hochstrasser D.F."/>
            <person name="Diaz J.-J."/>
        </authorList>
    </citation>
    <scope>SUBCELLULAR LOCATION [LARGE SCALE ANALYSIS]</scope>
    <source>
        <tissue>Cervix carcinoma</tissue>
    </source>
</reference>
<reference key="12">
    <citation type="journal article" date="2002" name="Curr. Biol.">
        <title>Directed proteomic analysis of the human nucleolus.</title>
        <authorList>
            <person name="Andersen J.S."/>
            <person name="Lyon C.E."/>
            <person name="Fox A.H."/>
            <person name="Leung A.K.L."/>
            <person name="Lam Y.W."/>
            <person name="Steen H."/>
            <person name="Mann M."/>
            <person name="Lamond A.I."/>
        </authorList>
    </citation>
    <scope>IDENTIFICATION BY MASS SPECTROMETRY</scope>
    <scope>SUBCELLULAR LOCATION</scope>
</reference>
<reference key="13">
    <citation type="journal article" date="2006" name="Cell">
        <title>Global, in vivo, and site-specific phosphorylation dynamics in signaling networks.</title>
        <authorList>
            <person name="Olsen J.V."/>
            <person name="Blagoev B."/>
            <person name="Gnad F."/>
            <person name="Macek B."/>
            <person name="Kumar C."/>
            <person name="Mortensen P."/>
            <person name="Mann M."/>
        </authorList>
    </citation>
    <scope>PHOSPHORYLATION [LARGE SCALE ANALYSIS] AT THR-340 AND SER-427</scope>
    <scope>IDENTIFICATION BY MASS SPECTROMETRY [LARGE SCALE ANALYSIS]</scope>
    <source>
        <tissue>Cervix carcinoma</tissue>
    </source>
</reference>
<reference key="14">
    <citation type="journal article" date="2006" name="Nat. Biotechnol.">
        <title>A probability-based approach for high-throughput protein phosphorylation analysis and site localization.</title>
        <authorList>
            <person name="Beausoleil S.A."/>
            <person name="Villen J."/>
            <person name="Gerber S.A."/>
            <person name="Rush J."/>
            <person name="Gygi S.P."/>
        </authorList>
    </citation>
    <scope>PHOSPHORYLATION [LARGE SCALE ANALYSIS] AT SER-392; SER-396; THR-423; SER-427 AND SER-469</scope>
    <scope>IDENTIFICATION BY MASS SPECTROMETRY [LARGE SCALE ANALYSIS]</scope>
    <source>
        <tissue>Cervix carcinoma</tissue>
    </source>
</reference>
<reference key="15">
    <citation type="journal article" date="2008" name="J. Proteome Res.">
        <title>Phosphorylation analysis of primary human T lymphocytes using sequential IMAC and titanium oxide enrichment.</title>
        <authorList>
            <person name="Carrascal M."/>
            <person name="Ovelleiro D."/>
            <person name="Casas V."/>
            <person name="Gay M."/>
            <person name="Abian J."/>
        </authorList>
    </citation>
    <scope>IDENTIFICATION BY MASS SPECTROMETRY [LARGE SCALE ANALYSIS]</scope>
    <source>
        <tissue>T-cell</tissue>
    </source>
</reference>
<reference key="16">
    <citation type="journal article" date="2008" name="Mol. Cell">
        <title>Kinase-selective enrichment enables quantitative phosphoproteomics of the kinome across the cell cycle.</title>
        <authorList>
            <person name="Daub H."/>
            <person name="Olsen J.V."/>
            <person name="Bairlein M."/>
            <person name="Gnad F."/>
            <person name="Oppermann F.S."/>
            <person name="Korner R."/>
            <person name="Greff Z."/>
            <person name="Keri G."/>
            <person name="Stemmann O."/>
            <person name="Mann M."/>
        </authorList>
    </citation>
    <scope>PHOSPHORYLATION [LARGE SCALE ANALYSIS] AT SER-427</scope>
    <scope>IDENTIFICATION BY MASS SPECTROMETRY [LARGE SCALE ANALYSIS]</scope>
    <source>
        <tissue>Cervix carcinoma</tissue>
    </source>
</reference>
<reference key="17">
    <citation type="journal article" date="2008" name="Mol. Cell. Biol.">
        <title>CSIG inhibits PTEN translation in replicative senescence.</title>
        <authorList>
            <person name="Ma L."/>
            <person name="Chang N."/>
            <person name="Guo S."/>
            <person name="Li Q."/>
            <person name="Zhang Z."/>
            <person name="Wang W."/>
            <person name="Tong T."/>
        </authorList>
    </citation>
    <scope>FUNCTION</scope>
    <scope>TISSUE SPECIFICITY</scope>
    <scope>SUBCELLULAR LOCATION</scope>
    <scope>INDUCTION</scope>
</reference>
<reference key="18">
    <citation type="journal article" date="2008" name="Proc. Natl. Acad. Sci. U.S.A.">
        <title>A quantitative atlas of mitotic phosphorylation.</title>
        <authorList>
            <person name="Dephoure N."/>
            <person name="Zhou C."/>
            <person name="Villen J."/>
            <person name="Beausoleil S.A."/>
            <person name="Bakalarski C.E."/>
            <person name="Elledge S.J."/>
            <person name="Gygi S.P."/>
        </authorList>
    </citation>
    <scope>PHOSPHORYLATION [LARGE SCALE ANALYSIS] AT THR-358; SER-361; SER-392; SER-396; THR-415; THR-423; SER-427; SER-443; THR-465 AND SER-469</scope>
    <scope>IDENTIFICATION BY MASS SPECTROMETRY [LARGE SCALE ANALYSIS]</scope>
    <source>
        <tissue>Cervix carcinoma</tissue>
    </source>
</reference>
<reference key="19">
    <citation type="journal article" date="2009" name="Anal. Chem.">
        <title>Lys-N and trypsin cover complementary parts of the phosphoproteome in a refined SCX-based approach.</title>
        <authorList>
            <person name="Gauci S."/>
            <person name="Helbig A.O."/>
            <person name="Slijper M."/>
            <person name="Krijgsveld J."/>
            <person name="Heck A.J."/>
            <person name="Mohammed S."/>
        </authorList>
    </citation>
    <scope>ACETYLATION [LARGE SCALE ANALYSIS] AT MET-1</scope>
    <scope>IDENTIFICATION BY MASS SPECTROMETRY [LARGE SCALE ANALYSIS]</scope>
</reference>
<reference key="20">
    <citation type="journal article" date="2009" name="Sci. Signal.">
        <title>Quantitative phosphoproteomic analysis of T cell receptor signaling reveals system-wide modulation of protein-protein interactions.</title>
        <authorList>
            <person name="Mayya V."/>
            <person name="Lundgren D.H."/>
            <person name="Hwang S.-I."/>
            <person name="Rezaul K."/>
            <person name="Wu L."/>
            <person name="Eng J.K."/>
            <person name="Rodionov V."/>
            <person name="Han D.K."/>
        </authorList>
    </citation>
    <scope>PHOSPHORYLATION [LARGE SCALE ANALYSIS] AT SER-361</scope>
    <scope>IDENTIFICATION BY MASS SPECTROMETRY [LARGE SCALE ANALYSIS]</scope>
    <source>
        <tissue>Leukemic T-cell</tissue>
    </source>
</reference>
<reference key="21">
    <citation type="journal article" date="2009" name="Science">
        <title>Lysine acetylation targets protein complexes and co-regulates major cellular functions.</title>
        <authorList>
            <person name="Choudhary C."/>
            <person name="Kumar C."/>
            <person name="Gnad F."/>
            <person name="Nielsen M.L."/>
            <person name="Rehman M."/>
            <person name="Walther T.C."/>
            <person name="Olsen J.V."/>
            <person name="Mann M."/>
        </authorList>
    </citation>
    <scope>ACETYLATION [LARGE SCALE ANALYSIS] AT LYS-468</scope>
    <scope>IDENTIFICATION BY MASS SPECTROMETRY [LARGE SCALE ANALYSIS]</scope>
</reference>
<reference key="22">
    <citation type="journal article" date="2010" name="Sci. Signal.">
        <title>Quantitative phosphoproteomics reveals widespread full phosphorylation site occupancy during mitosis.</title>
        <authorList>
            <person name="Olsen J.V."/>
            <person name="Vermeulen M."/>
            <person name="Santamaria A."/>
            <person name="Kumar C."/>
            <person name="Miller M.L."/>
            <person name="Jensen L.J."/>
            <person name="Gnad F."/>
            <person name="Cox J."/>
            <person name="Jensen T.S."/>
            <person name="Nigg E.A."/>
            <person name="Brunak S."/>
            <person name="Mann M."/>
        </authorList>
    </citation>
    <scope>PHOSPHORYLATION [LARGE SCALE ANALYSIS] AT THR-340; SER-361; THR-375; SER-392 AND SER-427</scope>
    <scope>IDENTIFICATION BY MASS SPECTROMETRY [LARGE SCALE ANALYSIS]</scope>
    <source>
        <tissue>Cervix carcinoma</tissue>
    </source>
</reference>
<reference key="23">
    <citation type="journal article" date="2011" name="BMC Syst. Biol.">
        <title>Initial characterization of the human central proteome.</title>
        <authorList>
            <person name="Burkard T.R."/>
            <person name="Planyavsky M."/>
            <person name="Kaupe I."/>
            <person name="Breitwieser F.P."/>
            <person name="Buerckstuemmer T."/>
            <person name="Bennett K.L."/>
            <person name="Superti-Furga G."/>
            <person name="Colinge J."/>
        </authorList>
    </citation>
    <scope>IDENTIFICATION BY MASS SPECTROMETRY [LARGE SCALE ANALYSIS]</scope>
</reference>
<reference key="24">
    <citation type="journal article" date="2011" name="Sci. Signal.">
        <title>System-wide temporal characterization of the proteome and phosphoproteome of human embryonic stem cell differentiation.</title>
        <authorList>
            <person name="Rigbolt K.T."/>
            <person name="Prokhorova T.A."/>
            <person name="Akimov V."/>
            <person name="Henningsen J."/>
            <person name="Johansen P.T."/>
            <person name="Kratchmarova I."/>
            <person name="Kassem M."/>
            <person name="Mann M."/>
            <person name="Olsen J.V."/>
            <person name="Blagoev B."/>
        </authorList>
    </citation>
    <scope>PHOSPHORYLATION [LARGE SCALE ANALYSIS] AT THR-358; SER-361; SER-396 AND SER-427</scope>
    <scope>IDENTIFICATION BY MASS SPECTROMETRY [LARGE SCALE ANALYSIS]</scope>
</reference>
<reference key="25">
    <citation type="journal article" date="2012" name="Cell Death Dis.">
        <title>Nucleolar protein CSIG is required for p33ING1 function in UV-induced apoptosis.</title>
        <authorList>
            <person name="Li N."/>
            <person name="Zhao G."/>
            <person name="Chen T."/>
            <person name="Xue L."/>
            <person name="Ma L."/>
            <person name="Niu J."/>
            <person name="Tong T."/>
        </authorList>
    </citation>
    <scope>FUNCTION</scope>
    <scope>SUBCELLULAR LOCATION</scope>
    <scope>INTERACTION WITH ING1</scope>
</reference>
<reference key="26">
    <citation type="journal article" date="2012" name="Mol. Cell. Proteomics">
        <title>Comparative large-scale characterisation of plant vs. mammal proteins reveals similar and idiosyncratic N-alpha acetylation features.</title>
        <authorList>
            <person name="Bienvenut W.V."/>
            <person name="Sumpton D."/>
            <person name="Martinez A."/>
            <person name="Lilla S."/>
            <person name="Espagne C."/>
            <person name="Meinnel T."/>
            <person name="Giglione C."/>
        </authorList>
    </citation>
    <scope>ACETYLATION [LARGE SCALE ANALYSIS] AT MET-1</scope>
    <scope>IDENTIFICATION BY MASS SPECTROMETRY [LARGE SCALE ANALYSIS]</scope>
</reference>
<reference key="27">
    <citation type="journal article" date="2012" name="Proc. Natl. Acad. Sci. U.S.A.">
        <title>N-terminal acetylome analyses and functional insights of the N-terminal acetyltransferase NatB.</title>
        <authorList>
            <person name="Van Damme P."/>
            <person name="Lasa M."/>
            <person name="Polevoda B."/>
            <person name="Gazquez C."/>
            <person name="Elosegui-Artola A."/>
            <person name="Kim D.S."/>
            <person name="De Juan-Pardo E."/>
            <person name="Demeyer K."/>
            <person name="Hole K."/>
            <person name="Larrea E."/>
            <person name="Timmerman E."/>
            <person name="Prieto J."/>
            <person name="Arnesen T."/>
            <person name="Sherman F."/>
            <person name="Gevaert K."/>
            <person name="Aldabe R."/>
        </authorList>
    </citation>
    <scope>ACETYLATION [LARGE SCALE ANALYSIS] AT MET-1</scope>
    <scope>IDENTIFICATION BY MASS SPECTROMETRY [LARGE SCALE ANALYSIS]</scope>
</reference>
<reference key="28">
    <citation type="journal article" date="2013" name="J. Proteome Res.">
        <title>Toward a comprehensive characterization of a human cancer cell phosphoproteome.</title>
        <authorList>
            <person name="Zhou H."/>
            <person name="Di Palma S."/>
            <person name="Preisinger C."/>
            <person name="Peng M."/>
            <person name="Polat A.N."/>
            <person name="Heck A.J."/>
            <person name="Mohammed S."/>
        </authorList>
    </citation>
    <scope>PHOSPHORYLATION [LARGE SCALE ANALYSIS] AT SER-361; THR-415; SER-427; THR-465 AND SER-469</scope>
    <scope>IDENTIFICATION BY MASS SPECTROMETRY [LARGE SCALE ANALYSIS]</scope>
    <source>
        <tissue>Cervix carcinoma</tissue>
        <tissue>Erythroleukemia</tissue>
    </source>
</reference>
<reference key="29">
    <citation type="journal article" date="2014" name="J. Proteomics">
        <title>An enzyme assisted RP-RPLC approach for in-depth analysis of human liver phosphoproteome.</title>
        <authorList>
            <person name="Bian Y."/>
            <person name="Song C."/>
            <person name="Cheng K."/>
            <person name="Dong M."/>
            <person name="Wang F."/>
            <person name="Huang J."/>
            <person name="Sun D."/>
            <person name="Wang L."/>
            <person name="Ye M."/>
            <person name="Zou H."/>
        </authorList>
    </citation>
    <scope>IDENTIFICATION BY MASS SPECTROMETRY [LARGE SCALE ANALYSIS]</scope>
    <source>
        <tissue>Liver</tissue>
    </source>
</reference>
<reference key="30">
    <citation type="journal article" date="2014" name="Nat. Struct. Mol. Biol.">
        <title>Uncovering global SUMOylation signaling networks in a site-specific manner.</title>
        <authorList>
            <person name="Hendriks I.A."/>
            <person name="D'Souza R.C."/>
            <person name="Yang B."/>
            <person name="Verlaan-de Vries M."/>
            <person name="Mann M."/>
            <person name="Vertegaal A.C."/>
        </authorList>
    </citation>
    <scope>SUMOYLATION [LARGE SCALE ANALYSIS] AT LYS-435</scope>
    <scope>IDENTIFICATION BY MASS SPECTROMETRY [LARGE SCALE ANALYSIS]</scope>
</reference>
<reference key="31">
    <citation type="journal article" date="2017" name="Nat. Struct. Mol. Biol.">
        <title>Site-specific mapping of the human SUMO proteome reveals co-modification with phosphorylation.</title>
        <authorList>
            <person name="Hendriks I.A."/>
            <person name="Lyon D."/>
            <person name="Young C."/>
            <person name="Jensen L.J."/>
            <person name="Vertegaal A.C."/>
            <person name="Nielsen M.L."/>
        </authorList>
    </citation>
    <scope>SUMOYLATION [LARGE SCALE ANALYSIS] AT LYS-120; LYS-254; LYS-380 AND LYS-461</scope>
    <scope>IDENTIFICATION BY MASS SPECTROMETRY [LARGE SCALE ANALYSIS]</scope>
</reference>
<reference key="32">
    <citation type="journal article" date="2023" name="J. Clin. Invest.">
        <title>Karyopherin alpha deficiency contributes to human preimplantation embryo arrest.</title>
        <authorList>
            <person name="Wang W."/>
            <person name="Miyamoto Y."/>
            <person name="Chen B."/>
            <person name="Shi J."/>
            <person name="Diao F."/>
            <person name="Zheng W."/>
            <person name="Li Q."/>
            <person name="Yu L."/>
            <person name="Li L."/>
            <person name="Xu Y."/>
            <person name="Wu L."/>
            <person name="Mao X."/>
            <person name="Fu J."/>
            <person name="Li B."/>
            <person name="Yan Z."/>
            <person name="Shi R."/>
            <person name="Xue X."/>
            <person name="Mu J."/>
            <person name="Zhang Z."/>
            <person name="Wu T."/>
            <person name="Zhao L."/>
            <person name="Wang W."/>
            <person name="Zhou Z."/>
            <person name="Dong J."/>
            <person name="Li Q."/>
            <person name="Jin L."/>
            <person name="He L."/>
            <person name="Sun X."/>
            <person name="Lin G."/>
            <person name="Kuang Y."/>
            <person name="Wang L."/>
            <person name="Sang Q."/>
        </authorList>
    </citation>
    <scope>INTERACTION WITH KPNA7 AND KPNA2</scope>
</reference>
<accession>O76021</accession>
<accession>B4DJ58</accession>
<accession>D3DUG7</accession>
<accession>Q2M1T7</accession>
<accession>Q6PL22</accession>
<accession>Q8IWS7</accession>
<accession>Q8WUZ1</accession>
<accession>Q9HDA9</accession>
<accession>Q9Y3Z9</accession>